<protein>
    <recommendedName>
        <fullName evidence="1">Altronate oxidoreductase</fullName>
        <ecNumber evidence="1">1.1.1.58</ecNumber>
    </recommendedName>
    <alternativeName>
        <fullName evidence="1">Tagaturonate dehydrogenase</fullName>
    </alternativeName>
    <alternativeName>
        <fullName evidence="1">Tagaturonate reductase</fullName>
    </alternativeName>
</protein>
<comment type="catalytic activity">
    <reaction evidence="1">
        <text>D-altronate + NAD(+) = keto-D-tagaturonate + NADH + H(+)</text>
        <dbReference type="Rhea" id="RHEA:17813"/>
        <dbReference type="ChEBI" id="CHEBI:15378"/>
        <dbReference type="ChEBI" id="CHEBI:17360"/>
        <dbReference type="ChEBI" id="CHEBI:17886"/>
        <dbReference type="ChEBI" id="CHEBI:57540"/>
        <dbReference type="ChEBI" id="CHEBI:57945"/>
        <dbReference type="EC" id="1.1.1.58"/>
    </reaction>
</comment>
<comment type="pathway">
    <text evidence="1">Carbohydrate metabolism; pentose and glucuronate interconversion.</text>
</comment>
<comment type="similarity">
    <text evidence="1">Belongs to the mannitol dehydrogenase family. UxaB subfamily.</text>
</comment>
<proteinExistence type="inferred from homology"/>
<sequence length="483" mass="54808">MKTLNRRDFPGAQYPERIIQFGEGNFLRAFVDWQIDLLNEHTDLNSGVVVVRPIETSFPPSLSTQDGLYTTIIRGLNEKGEAVSDARLIRSVNREISVYSEYDEFLKLAHNPEMRFVFSNTTEAGISYHAGDKFDDAPAVSYPAKLTRLLFERFSHFNGALDKGWIIIPCELIDYNGDALRELVLRYAQEWALPEAFIQWLDQANSFCSTLVDRIVTGYPRDEVAKLEEELGYHDGFLDTAEHFYLFVIQGPKSLATELRLDKYPLNVLIVDDIKPYKERKVAILNGAHTALVPVAFQAGLDTVGEAMNDAEICAFVEKAIYEEIIPVLDLPRDELESFASAVTGRFRNPYIKHQLLSIALNGMTKFRTRILPQLLAGQKANGTLPARLTFALAALIAFYRGERNGETYPVQDDAHWLERYQQLWSQHRDRVIGTQELVAIVLAEKDHWEQDLTQVPGLVEQVANDLDAILEKGMREAVRPLC</sequence>
<accession>B1LF94</accession>
<gene>
    <name evidence="1" type="primary">uxaB</name>
    <name type="ordered locus">EcSMS35_1651</name>
</gene>
<reference key="1">
    <citation type="journal article" date="2008" name="J. Bacteriol.">
        <title>Insights into the environmental resistance gene pool from the genome sequence of the multidrug-resistant environmental isolate Escherichia coli SMS-3-5.</title>
        <authorList>
            <person name="Fricke W.F."/>
            <person name="Wright M.S."/>
            <person name="Lindell A.H."/>
            <person name="Harkins D.M."/>
            <person name="Baker-Austin C."/>
            <person name="Ravel J."/>
            <person name="Stepanauskas R."/>
        </authorList>
    </citation>
    <scope>NUCLEOTIDE SEQUENCE [LARGE SCALE GENOMIC DNA]</scope>
    <source>
        <strain>SMS-3-5 / SECEC</strain>
    </source>
</reference>
<organism>
    <name type="scientific">Escherichia coli (strain SMS-3-5 / SECEC)</name>
    <dbReference type="NCBI Taxonomy" id="439855"/>
    <lineage>
        <taxon>Bacteria</taxon>
        <taxon>Pseudomonadati</taxon>
        <taxon>Pseudomonadota</taxon>
        <taxon>Gammaproteobacteria</taxon>
        <taxon>Enterobacterales</taxon>
        <taxon>Enterobacteriaceae</taxon>
        <taxon>Escherichia</taxon>
    </lineage>
</organism>
<name>UXAB_ECOSM</name>
<feature type="chain" id="PRO_1000131512" description="Altronate oxidoreductase">
    <location>
        <begin position="1"/>
        <end position="483"/>
    </location>
</feature>
<feature type="binding site" evidence="1">
    <location>
        <begin position="18"/>
        <end position="29"/>
    </location>
    <ligand>
        <name>NAD(+)</name>
        <dbReference type="ChEBI" id="CHEBI:57540"/>
    </ligand>
</feature>
<evidence type="ECO:0000255" key="1">
    <source>
        <dbReference type="HAMAP-Rule" id="MF_00670"/>
    </source>
</evidence>
<dbReference type="EC" id="1.1.1.58" evidence="1"/>
<dbReference type="EMBL" id="CP000970">
    <property type="protein sequence ID" value="ACB15481.1"/>
    <property type="molecule type" value="Genomic_DNA"/>
</dbReference>
<dbReference type="RefSeq" id="WP_000854633.1">
    <property type="nucleotide sequence ID" value="NC_010498.1"/>
</dbReference>
<dbReference type="SMR" id="B1LF94"/>
<dbReference type="KEGG" id="ecm:EcSMS35_1651"/>
<dbReference type="HOGENOM" id="CLU_027324_1_0_6"/>
<dbReference type="UniPathway" id="UPA00246"/>
<dbReference type="Proteomes" id="UP000007011">
    <property type="component" value="Chromosome"/>
</dbReference>
<dbReference type="GO" id="GO:0005829">
    <property type="term" value="C:cytosol"/>
    <property type="evidence" value="ECO:0007669"/>
    <property type="project" value="TreeGrafter"/>
</dbReference>
<dbReference type="GO" id="GO:0008926">
    <property type="term" value="F:mannitol-1-phosphate 5-dehydrogenase activity"/>
    <property type="evidence" value="ECO:0007669"/>
    <property type="project" value="TreeGrafter"/>
</dbReference>
<dbReference type="GO" id="GO:0009026">
    <property type="term" value="F:tagaturonate reductase activity"/>
    <property type="evidence" value="ECO:0007669"/>
    <property type="project" value="UniProtKB-UniRule"/>
</dbReference>
<dbReference type="GO" id="GO:0019698">
    <property type="term" value="P:D-galacturonate catabolic process"/>
    <property type="evidence" value="ECO:0007669"/>
    <property type="project" value="TreeGrafter"/>
</dbReference>
<dbReference type="GO" id="GO:0019592">
    <property type="term" value="P:mannitol catabolic process"/>
    <property type="evidence" value="ECO:0007669"/>
    <property type="project" value="TreeGrafter"/>
</dbReference>
<dbReference type="FunFam" id="1.10.1040.10:FF:000018">
    <property type="entry name" value="Altronate oxidoreductase"/>
    <property type="match status" value="1"/>
</dbReference>
<dbReference type="FunFam" id="3.40.50.720:FF:000153">
    <property type="entry name" value="Altronate oxidoreductase"/>
    <property type="match status" value="1"/>
</dbReference>
<dbReference type="Gene3D" id="1.10.1040.10">
    <property type="entry name" value="N-(1-d-carboxylethyl)-l-norvaline Dehydrogenase, domain 2"/>
    <property type="match status" value="1"/>
</dbReference>
<dbReference type="Gene3D" id="3.40.50.720">
    <property type="entry name" value="NAD(P)-binding Rossmann-like Domain"/>
    <property type="match status" value="1"/>
</dbReference>
<dbReference type="HAMAP" id="MF_00670">
    <property type="entry name" value="Altron_oxidoreduct"/>
    <property type="match status" value="1"/>
</dbReference>
<dbReference type="InterPro" id="IPR008927">
    <property type="entry name" value="6-PGluconate_DH-like_C_sf"/>
</dbReference>
<dbReference type="InterPro" id="IPR013328">
    <property type="entry name" value="6PGD_dom2"/>
</dbReference>
<dbReference type="InterPro" id="IPR023668">
    <property type="entry name" value="Altronate_OxRdtase"/>
</dbReference>
<dbReference type="InterPro" id="IPR013118">
    <property type="entry name" value="Mannitol_DH_C"/>
</dbReference>
<dbReference type="InterPro" id="IPR013131">
    <property type="entry name" value="Mannitol_DH_N"/>
</dbReference>
<dbReference type="InterPro" id="IPR036291">
    <property type="entry name" value="NAD(P)-bd_dom_sf"/>
</dbReference>
<dbReference type="NCBIfam" id="NF002969">
    <property type="entry name" value="PRK03643.1"/>
    <property type="match status" value="1"/>
</dbReference>
<dbReference type="PANTHER" id="PTHR30524:SF0">
    <property type="entry name" value="ALTRONATE OXIDOREDUCTASE-RELATED"/>
    <property type="match status" value="1"/>
</dbReference>
<dbReference type="PANTHER" id="PTHR30524">
    <property type="entry name" value="MANNITOL-1-PHOSPHATE 5-DEHYDROGENASE"/>
    <property type="match status" value="1"/>
</dbReference>
<dbReference type="Pfam" id="PF01232">
    <property type="entry name" value="Mannitol_dh"/>
    <property type="match status" value="1"/>
</dbReference>
<dbReference type="Pfam" id="PF08125">
    <property type="entry name" value="Mannitol_dh_C"/>
    <property type="match status" value="1"/>
</dbReference>
<dbReference type="SUPFAM" id="SSF48179">
    <property type="entry name" value="6-phosphogluconate dehydrogenase C-terminal domain-like"/>
    <property type="match status" value="1"/>
</dbReference>
<dbReference type="SUPFAM" id="SSF51735">
    <property type="entry name" value="NAD(P)-binding Rossmann-fold domains"/>
    <property type="match status" value="1"/>
</dbReference>
<keyword id="KW-0520">NAD</keyword>
<keyword id="KW-0560">Oxidoreductase</keyword>